<geneLocation type="chloroplast"/>
<proteinExistence type="inferred from homology"/>
<keyword id="KW-0150">Chloroplast</keyword>
<keyword id="KW-0472">Membrane</keyword>
<keyword id="KW-0520">NAD</keyword>
<keyword id="KW-0521">NADP</keyword>
<keyword id="KW-0934">Plastid</keyword>
<keyword id="KW-0618">Plastoquinone</keyword>
<keyword id="KW-0874">Quinone</keyword>
<keyword id="KW-0793">Thylakoid</keyword>
<keyword id="KW-1278">Translocase</keyword>
<keyword id="KW-0812">Transmembrane</keyword>
<keyword id="KW-1133">Transmembrane helix</keyword>
<name>NU4C_NANDO</name>
<comment type="catalytic activity">
    <reaction evidence="1">
        <text>a plastoquinone + NADH + (n+1) H(+)(in) = a plastoquinol + NAD(+) + n H(+)(out)</text>
        <dbReference type="Rhea" id="RHEA:42608"/>
        <dbReference type="Rhea" id="RHEA-COMP:9561"/>
        <dbReference type="Rhea" id="RHEA-COMP:9562"/>
        <dbReference type="ChEBI" id="CHEBI:15378"/>
        <dbReference type="ChEBI" id="CHEBI:17757"/>
        <dbReference type="ChEBI" id="CHEBI:57540"/>
        <dbReference type="ChEBI" id="CHEBI:57945"/>
        <dbReference type="ChEBI" id="CHEBI:62192"/>
    </reaction>
</comment>
<comment type="catalytic activity">
    <reaction evidence="1">
        <text>a plastoquinone + NADPH + (n+1) H(+)(in) = a plastoquinol + NADP(+) + n H(+)(out)</text>
        <dbReference type="Rhea" id="RHEA:42612"/>
        <dbReference type="Rhea" id="RHEA-COMP:9561"/>
        <dbReference type="Rhea" id="RHEA-COMP:9562"/>
        <dbReference type="ChEBI" id="CHEBI:15378"/>
        <dbReference type="ChEBI" id="CHEBI:17757"/>
        <dbReference type="ChEBI" id="CHEBI:57783"/>
        <dbReference type="ChEBI" id="CHEBI:58349"/>
        <dbReference type="ChEBI" id="CHEBI:62192"/>
    </reaction>
</comment>
<comment type="subcellular location">
    <subcellularLocation>
        <location evidence="1">Plastid</location>
        <location evidence="1">Chloroplast thylakoid membrane</location>
        <topology evidence="1">Multi-pass membrane protein</topology>
    </subcellularLocation>
</comment>
<comment type="similarity">
    <text evidence="1">Belongs to the complex I subunit 4 family.</text>
</comment>
<protein>
    <recommendedName>
        <fullName evidence="1">NAD(P)H-quinone oxidoreductase chain 4, chloroplastic</fullName>
        <ecNumber evidence="1">7.1.1.-</ecNumber>
    </recommendedName>
    <alternativeName>
        <fullName evidence="1">NAD(P)H dehydrogenase, chain 4</fullName>
    </alternativeName>
    <alternativeName>
        <fullName evidence="1">NADH-plastoquinone oxidoreductase chain 4</fullName>
    </alternativeName>
</protein>
<reference key="1">
    <citation type="journal article" date="2006" name="BMC Plant Biol.">
        <title>Rapid and accurate pyrosequencing of angiosperm plastid genomes.</title>
        <authorList>
            <person name="Moore M.J."/>
            <person name="Dhingra A."/>
            <person name="Soltis P.S."/>
            <person name="Shaw R."/>
            <person name="Farmerie W.G."/>
            <person name="Folta K.M."/>
            <person name="Soltis D.E."/>
        </authorList>
    </citation>
    <scope>NUCLEOTIDE SEQUENCE [LARGE SCALE GENOMIC DNA]</scope>
</reference>
<accession>Q09FR0</accession>
<gene>
    <name evidence="1" type="primary">ndhD</name>
</gene>
<organism>
    <name type="scientific">Nandina domestica</name>
    <name type="common">Heavenly bamboo</name>
    <dbReference type="NCBI Taxonomy" id="41776"/>
    <lineage>
        <taxon>Eukaryota</taxon>
        <taxon>Viridiplantae</taxon>
        <taxon>Streptophyta</taxon>
        <taxon>Embryophyta</taxon>
        <taxon>Tracheophyta</taxon>
        <taxon>Spermatophyta</taxon>
        <taxon>Magnoliopsida</taxon>
        <taxon>Ranunculales</taxon>
        <taxon>Berberidaceae</taxon>
        <taxon>Nandinoideae</taxon>
        <taxon>Nandineae</taxon>
        <taxon>Nandina</taxon>
    </lineage>
</organism>
<evidence type="ECO:0000255" key="1">
    <source>
        <dbReference type="HAMAP-Rule" id="MF_00491"/>
    </source>
</evidence>
<sequence>MNSFPWLTIIVVLPIFAGSSIFFFPHRGNKVIRWYTICICLLELLLTTYAFCYHFQLDDPLVQLEQDYKWINIFDFHWRLGIDGLSIGPVLLTGFITTLATLAAWPVTRDSRLFHFLMLAMYSGQIGSFSSRDLLLFFIMWELELIPVYLLLSMWGGKKRLYSATKFILYTAGGSIFLLIGVSGMGLYGSNEPTLNFETSANQSYPVALEILLYFGFFIAYAVKLPIIPLHTWLPDTHGEAHYSTCMLLAGILLKMGAYGLVRINMELLPHAHSIFSPWLMIVGTIQIIYAASTSLGQRNLKKRIAYSSVSHMGFTILGISSITDTGLNGAILQMISHGFIGAALFFLAGTSYDRIRLVYLDEMGGIAIPMPKIFTLFSSFSMASLALPGMSGFVAELVVFFGIITSEKFFLMPKILITFVTAIGMILTPIYSLSMLRQIFYGYKQFNVPNSHFFDSGPRELFVSICIFLPVIGIGIYPDFVFSLSVDKVEAILSNYFYR</sequence>
<feature type="chain" id="PRO_0000343293" description="NAD(P)H-quinone oxidoreductase chain 4, chloroplastic">
    <location>
        <begin position="1"/>
        <end position="500"/>
    </location>
</feature>
<feature type="transmembrane region" description="Helical" evidence="1">
    <location>
        <begin position="4"/>
        <end position="24"/>
    </location>
</feature>
<feature type="transmembrane region" description="Helical" evidence="1">
    <location>
        <begin position="35"/>
        <end position="55"/>
    </location>
</feature>
<feature type="transmembrane region" description="Helical" evidence="1">
    <location>
        <begin position="87"/>
        <end position="107"/>
    </location>
</feature>
<feature type="transmembrane region" description="Helical" evidence="1">
    <location>
        <begin position="113"/>
        <end position="130"/>
    </location>
</feature>
<feature type="transmembrane region" description="Helical" evidence="1">
    <location>
        <begin position="134"/>
        <end position="154"/>
    </location>
</feature>
<feature type="transmembrane region" description="Helical" evidence="1">
    <location>
        <begin position="167"/>
        <end position="187"/>
    </location>
</feature>
<feature type="transmembrane region" description="Helical" evidence="1">
    <location>
        <begin position="208"/>
        <end position="228"/>
    </location>
</feature>
<feature type="transmembrane region" description="Helical" evidence="1">
    <location>
        <begin position="242"/>
        <end position="262"/>
    </location>
</feature>
<feature type="transmembrane region" description="Helical" evidence="1">
    <location>
        <begin position="272"/>
        <end position="292"/>
    </location>
</feature>
<feature type="transmembrane region" description="Helical" evidence="1">
    <location>
        <begin position="305"/>
        <end position="325"/>
    </location>
</feature>
<feature type="transmembrane region" description="Helical" evidence="1">
    <location>
        <begin position="330"/>
        <end position="350"/>
    </location>
</feature>
<feature type="transmembrane region" description="Helical" evidence="1">
    <location>
        <begin position="386"/>
        <end position="406"/>
    </location>
</feature>
<feature type="transmembrane region" description="Helical" evidence="1">
    <location>
        <begin position="416"/>
        <end position="436"/>
    </location>
</feature>
<feature type="transmembrane region" description="Helical" evidence="1">
    <location>
        <begin position="463"/>
        <end position="483"/>
    </location>
</feature>
<dbReference type="EC" id="7.1.1.-" evidence="1"/>
<dbReference type="EMBL" id="DQ923117">
    <property type="protein sequence ID" value="ABI49915.1"/>
    <property type="molecule type" value="Genomic_DNA"/>
</dbReference>
<dbReference type="RefSeq" id="YP_740701.1">
    <property type="nucleotide sequence ID" value="NC_008336.1"/>
</dbReference>
<dbReference type="SMR" id="Q09FR0"/>
<dbReference type="GeneID" id="4271649"/>
<dbReference type="GO" id="GO:0009535">
    <property type="term" value="C:chloroplast thylakoid membrane"/>
    <property type="evidence" value="ECO:0007669"/>
    <property type="project" value="UniProtKB-SubCell"/>
</dbReference>
<dbReference type="GO" id="GO:0008137">
    <property type="term" value="F:NADH dehydrogenase (ubiquinone) activity"/>
    <property type="evidence" value="ECO:0007669"/>
    <property type="project" value="InterPro"/>
</dbReference>
<dbReference type="GO" id="GO:0048039">
    <property type="term" value="F:ubiquinone binding"/>
    <property type="evidence" value="ECO:0007669"/>
    <property type="project" value="TreeGrafter"/>
</dbReference>
<dbReference type="GO" id="GO:0042773">
    <property type="term" value="P:ATP synthesis coupled electron transport"/>
    <property type="evidence" value="ECO:0007669"/>
    <property type="project" value="InterPro"/>
</dbReference>
<dbReference type="GO" id="GO:0015990">
    <property type="term" value="P:electron transport coupled proton transport"/>
    <property type="evidence" value="ECO:0007669"/>
    <property type="project" value="TreeGrafter"/>
</dbReference>
<dbReference type="HAMAP" id="MF_00491">
    <property type="entry name" value="NDH1_NuoM"/>
    <property type="match status" value="1"/>
</dbReference>
<dbReference type="InterPro" id="IPR022997">
    <property type="entry name" value="NADH_Q_OxRdtase_chain4"/>
</dbReference>
<dbReference type="InterPro" id="IPR010227">
    <property type="entry name" value="NADH_Q_OxRdtase_chainM/4"/>
</dbReference>
<dbReference type="InterPro" id="IPR003918">
    <property type="entry name" value="NADH_UbQ_OxRdtase"/>
</dbReference>
<dbReference type="InterPro" id="IPR001750">
    <property type="entry name" value="ND/Mrp_TM"/>
</dbReference>
<dbReference type="NCBIfam" id="TIGR01972">
    <property type="entry name" value="NDH_I_M"/>
    <property type="match status" value="1"/>
</dbReference>
<dbReference type="PANTHER" id="PTHR43507:SF21">
    <property type="entry name" value="NAD(P)H-QUINONE OXIDOREDUCTASE CHAIN 4, CHLOROPLASTIC"/>
    <property type="match status" value="1"/>
</dbReference>
<dbReference type="PANTHER" id="PTHR43507">
    <property type="entry name" value="NADH-UBIQUINONE OXIDOREDUCTASE CHAIN 4"/>
    <property type="match status" value="1"/>
</dbReference>
<dbReference type="Pfam" id="PF00361">
    <property type="entry name" value="Proton_antipo_M"/>
    <property type="match status" value="1"/>
</dbReference>
<dbReference type="PRINTS" id="PR01437">
    <property type="entry name" value="NUOXDRDTASE4"/>
</dbReference>